<organism>
    <name type="scientific">Staphylococcus aureus (strain JH9)</name>
    <dbReference type="NCBI Taxonomy" id="359786"/>
    <lineage>
        <taxon>Bacteria</taxon>
        <taxon>Bacillati</taxon>
        <taxon>Bacillota</taxon>
        <taxon>Bacilli</taxon>
        <taxon>Bacillales</taxon>
        <taxon>Staphylococcaceae</taxon>
        <taxon>Staphylococcus</taxon>
    </lineage>
</organism>
<name>GUAC_STAA9</name>
<feature type="chain" id="PRO_1000087525" description="GMP reductase">
    <location>
        <begin position="1"/>
        <end position="325"/>
    </location>
</feature>
<feature type="active site" description="Thioimidate intermediate" evidence="1">
    <location>
        <position position="174"/>
    </location>
</feature>
<feature type="binding site" evidence="1">
    <location>
        <begin position="203"/>
        <end position="226"/>
    </location>
    <ligand>
        <name>NADP(+)</name>
        <dbReference type="ChEBI" id="CHEBI:58349"/>
    </ligand>
</feature>
<evidence type="ECO:0000255" key="1">
    <source>
        <dbReference type="HAMAP-Rule" id="MF_01511"/>
    </source>
</evidence>
<comment type="function">
    <text evidence="1">Catalyzes the irreversible NADPH-dependent deamination of GMP to IMP. It functions in the conversion of nucleobase, nucleoside and nucleotide derivatives of G to A nucleotides, and in maintaining the intracellular balance of A and G nucleotides.</text>
</comment>
<comment type="catalytic activity">
    <reaction evidence="1">
        <text>IMP + NH4(+) + NADP(+) = GMP + NADPH + 2 H(+)</text>
        <dbReference type="Rhea" id="RHEA:17185"/>
        <dbReference type="ChEBI" id="CHEBI:15378"/>
        <dbReference type="ChEBI" id="CHEBI:28938"/>
        <dbReference type="ChEBI" id="CHEBI:57783"/>
        <dbReference type="ChEBI" id="CHEBI:58053"/>
        <dbReference type="ChEBI" id="CHEBI:58115"/>
        <dbReference type="ChEBI" id="CHEBI:58349"/>
        <dbReference type="EC" id="1.7.1.7"/>
    </reaction>
</comment>
<comment type="similarity">
    <text evidence="1">Belongs to the IMPDH/GMPR family. GuaC type 2 subfamily.</text>
</comment>
<accession>A5ISL9</accession>
<protein>
    <recommendedName>
        <fullName evidence="1">GMP reductase</fullName>
        <ecNumber evidence="1">1.7.1.7</ecNumber>
    </recommendedName>
    <alternativeName>
        <fullName evidence="1">Guanosine 5'-monophosphate oxidoreductase</fullName>
        <shortName evidence="1">Guanosine monophosphate reductase</shortName>
    </alternativeName>
</protein>
<gene>
    <name evidence="1" type="primary">guaC</name>
    <name type="ordered locus">SaurJH9_1398</name>
</gene>
<proteinExistence type="inferred from homology"/>
<sequence length="325" mass="36129">MKIFDYEDIQLIPNKCIVESRSECDTTIQFGPKKFKLPVVPANMQTVMNEKLAKWFAENDYFYIMHRFDEEARIPFIKHMQNSGLFASISVGVKKAEFDFIEKLAQEKLIPEYITIDIAHGHSDSVINMIKHIKNHIPDSFVIAGNVGTPEGVRELENAGADATKVGIGPGRVCITKIKTGFGTGGWQLAALNICSKAARKPLIADGGIRTHGDIAKSIRFGASMVMIGSLFAAHEESPGETVELDGKQYKEYFGSASEFQKGEHKNVEGKKMFVEHKGSLMDTLKEMQQDLQSSISYAGGKDLKSLRTVDYVIVRNSIFNGDRD</sequence>
<reference key="1">
    <citation type="submission" date="2007-05" db="EMBL/GenBank/DDBJ databases">
        <title>Complete sequence of chromosome of Staphylococcus aureus subsp. aureus JH9.</title>
        <authorList>
            <consortium name="US DOE Joint Genome Institute"/>
            <person name="Copeland A."/>
            <person name="Lucas S."/>
            <person name="Lapidus A."/>
            <person name="Barry K."/>
            <person name="Detter J.C."/>
            <person name="Glavina del Rio T."/>
            <person name="Hammon N."/>
            <person name="Israni S."/>
            <person name="Pitluck S."/>
            <person name="Chain P."/>
            <person name="Malfatti S."/>
            <person name="Shin M."/>
            <person name="Vergez L."/>
            <person name="Schmutz J."/>
            <person name="Larimer F."/>
            <person name="Land M."/>
            <person name="Hauser L."/>
            <person name="Kyrpides N."/>
            <person name="Kim E."/>
            <person name="Tomasz A."/>
            <person name="Richardson P."/>
        </authorList>
    </citation>
    <scope>NUCLEOTIDE SEQUENCE [LARGE SCALE GENOMIC DNA]</scope>
    <source>
        <strain>JH9</strain>
    </source>
</reference>
<keyword id="KW-0521">NADP</keyword>
<keyword id="KW-0560">Oxidoreductase</keyword>
<dbReference type="EC" id="1.7.1.7" evidence="1"/>
<dbReference type="EMBL" id="CP000703">
    <property type="protein sequence ID" value="ABQ49192.1"/>
    <property type="molecule type" value="Genomic_DNA"/>
</dbReference>
<dbReference type="RefSeq" id="WP_000688122.1">
    <property type="nucleotide sequence ID" value="NC_009487.1"/>
</dbReference>
<dbReference type="SMR" id="A5ISL9"/>
<dbReference type="KEGG" id="saj:SaurJH9_1398"/>
<dbReference type="HOGENOM" id="CLU_022552_5_0_9"/>
<dbReference type="GO" id="GO:0005829">
    <property type="term" value="C:cytosol"/>
    <property type="evidence" value="ECO:0007669"/>
    <property type="project" value="TreeGrafter"/>
</dbReference>
<dbReference type="GO" id="GO:1902560">
    <property type="term" value="C:GMP reductase complex"/>
    <property type="evidence" value="ECO:0007669"/>
    <property type="project" value="InterPro"/>
</dbReference>
<dbReference type="GO" id="GO:0003920">
    <property type="term" value="F:GMP reductase activity"/>
    <property type="evidence" value="ECO:0007669"/>
    <property type="project" value="UniProtKB-UniRule"/>
</dbReference>
<dbReference type="GO" id="GO:0006163">
    <property type="term" value="P:purine nucleotide metabolic process"/>
    <property type="evidence" value="ECO:0007669"/>
    <property type="project" value="UniProtKB-UniRule"/>
</dbReference>
<dbReference type="CDD" id="cd00381">
    <property type="entry name" value="IMPDH"/>
    <property type="match status" value="1"/>
</dbReference>
<dbReference type="FunFam" id="3.20.20.70:FF:000079">
    <property type="entry name" value="GMP reductase"/>
    <property type="match status" value="1"/>
</dbReference>
<dbReference type="Gene3D" id="3.20.20.70">
    <property type="entry name" value="Aldolase class I"/>
    <property type="match status" value="1"/>
</dbReference>
<dbReference type="HAMAP" id="MF_01511">
    <property type="entry name" value="GMP_reduct_type2"/>
    <property type="match status" value="1"/>
</dbReference>
<dbReference type="InterPro" id="IPR013785">
    <property type="entry name" value="Aldolase_TIM"/>
</dbReference>
<dbReference type="InterPro" id="IPR050139">
    <property type="entry name" value="GMP_reductase"/>
</dbReference>
<dbReference type="InterPro" id="IPR005994">
    <property type="entry name" value="GuaC_type_2"/>
</dbReference>
<dbReference type="InterPro" id="IPR015875">
    <property type="entry name" value="IMP_DH/GMP_Rdtase_CS"/>
</dbReference>
<dbReference type="InterPro" id="IPR001093">
    <property type="entry name" value="IMP_DH_GMPRt"/>
</dbReference>
<dbReference type="NCBIfam" id="TIGR01306">
    <property type="entry name" value="GMP_reduct_2"/>
    <property type="match status" value="1"/>
</dbReference>
<dbReference type="NCBIfam" id="NF003966">
    <property type="entry name" value="PRK05458.1"/>
    <property type="match status" value="1"/>
</dbReference>
<dbReference type="PANTHER" id="PTHR43170">
    <property type="entry name" value="GMP REDUCTASE"/>
    <property type="match status" value="1"/>
</dbReference>
<dbReference type="PANTHER" id="PTHR43170:SF5">
    <property type="entry name" value="GMP REDUCTASE"/>
    <property type="match status" value="1"/>
</dbReference>
<dbReference type="Pfam" id="PF00478">
    <property type="entry name" value="IMPDH"/>
    <property type="match status" value="1"/>
</dbReference>
<dbReference type="PIRSF" id="PIRSF036500">
    <property type="entry name" value="GMP_red_Firmic"/>
    <property type="match status" value="1"/>
</dbReference>
<dbReference type="SMART" id="SM01240">
    <property type="entry name" value="IMPDH"/>
    <property type="match status" value="1"/>
</dbReference>
<dbReference type="SUPFAM" id="SSF51412">
    <property type="entry name" value="Inosine monophosphate dehydrogenase (IMPDH)"/>
    <property type="match status" value="1"/>
</dbReference>
<dbReference type="PROSITE" id="PS00487">
    <property type="entry name" value="IMP_DH_GMP_RED"/>
    <property type="match status" value="1"/>
</dbReference>